<keyword id="KW-0028">Amino-acid biosynthesis</keyword>
<keyword id="KW-0100">Branched-chain amino acid biosynthesis</keyword>
<keyword id="KW-0432">Leucine biosynthesis</keyword>
<keyword id="KW-0456">Lyase</keyword>
<keyword id="KW-1185">Reference proteome</keyword>
<proteinExistence type="inferred from homology"/>
<dbReference type="EC" id="4.2.1.33" evidence="1"/>
<dbReference type="EMBL" id="CP000133">
    <property type="protein sequence ID" value="ABC92834.1"/>
    <property type="molecule type" value="Genomic_DNA"/>
</dbReference>
<dbReference type="RefSeq" id="WP_011427272.1">
    <property type="nucleotide sequence ID" value="NC_007761.1"/>
</dbReference>
<dbReference type="SMR" id="Q2K2V2"/>
<dbReference type="KEGG" id="ret:RHE_CH04091"/>
<dbReference type="eggNOG" id="COG0066">
    <property type="taxonomic scope" value="Bacteria"/>
</dbReference>
<dbReference type="HOGENOM" id="CLU_081378_0_3_5"/>
<dbReference type="OrthoDB" id="9777465at2"/>
<dbReference type="UniPathway" id="UPA00048">
    <property type="reaction ID" value="UER00071"/>
</dbReference>
<dbReference type="Proteomes" id="UP000001936">
    <property type="component" value="Chromosome"/>
</dbReference>
<dbReference type="GO" id="GO:0009316">
    <property type="term" value="C:3-isopropylmalate dehydratase complex"/>
    <property type="evidence" value="ECO:0007669"/>
    <property type="project" value="InterPro"/>
</dbReference>
<dbReference type="GO" id="GO:0003861">
    <property type="term" value="F:3-isopropylmalate dehydratase activity"/>
    <property type="evidence" value="ECO:0007669"/>
    <property type="project" value="UniProtKB-UniRule"/>
</dbReference>
<dbReference type="GO" id="GO:0009098">
    <property type="term" value="P:L-leucine biosynthetic process"/>
    <property type="evidence" value="ECO:0007669"/>
    <property type="project" value="UniProtKB-UniRule"/>
</dbReference>
<dbReference type="CDD" id="cd01577">
    <property type="entry name" value="IPMI_Swivel"/>
    <property type="match status" value="1"/>
</dbReference>
<dbReference type="FunFam" id="3.20.19.10:FF:000003">
    <property type="entry name" value="3-isopropylmalate dehydratase small subunit"/>
    <property type="match status" value="1"/>
</dbReference>
<dbReference type="Gene3D" id="3.20.19.10">
    <property type="entry name" value="Aconitase, domain 4"/>
    <property type="match status" value="1"/>
</dbReference>
<dbReference type="HAMAP" id="MF_01031">
    <property type="entry name" value="LeuD_type1"/>
    <property type="match status" value="1"/>
</dbReference>
<dbReference type="InterPro" id="IPR004431">
    <property type="entry name" value="3-IsopropMal_deHydase_ssu"/>
</dbReference>
<dbReference type="InterPro" id="IPR015928">
    <property type="entry name" value="Aconitase/3IPM_dehydase_swvl"/>
</dbReference>
<dbReference type="InterPro" id="IPR000573">
    <property type="entry name" value="AconitaseA/IPMdHydase_ssu_swvl"/>
</dbReference>
<dbReference type="InterPro" id="IPR033940">
    <property type="entry name" value="IPMI_Swivel"/>
</dbReference>
<dbReference type="InterPro" id="IPR050075">
    <property type="entry name" value="LeuD"/>
</dbReference>
<dbReference type="NCBIfam" id="TIGR00171">
    <property type="entry name" value="leuD"/>
    <property type="match status" value="1"/>
</dbReference>
<dbReference type="NCBIfam" id="NF002458">
    <property type="entry name" value="PRK01641.1"/>
    <property type="match status" value="1"/>
</dbReference>
<dbReference type="PANTHER" id="PTHR43345:SF5">
    <property type="entry name" value="3-ISOPROPYLMALATE DEHYDRATASE SMALL SUBUNIT"/>
    <property type="match status" value="1"/>
</dbReference>
<dbReference type="PANTHER" id="PTHR43345">
    <property type="entry name" value="3-ISOPROPYLMALATE DEHYDRATASE SMALL SUBUNIT 2-RELATED-RELATED"/>
    <property type="match status" value="1"/>
</dbReference>
<dbReference type="Pfam" id="PF00694">
    <property type="entry name" value="Aconitase_C"/>
    <property type="match status" value="1"/>
</dbReference>
<dbReference type="SUPFAM" id="SSF52016">
    <property type="entry name" value="LeuD/IlvD-like"/>
    <property type="match status" value="1"/>
</dbReference>
<feature type="chain" id="PRO_1000063812" description="3-isopropylmalate dehydratase small subunit">
    <location>
        <begin position="1"/>
        <end position="202"/>
    </location>
</feature>
<organism>
    <name type="scientific">Rhizobium etli (strain ATCC 51251 / DSM 11541 / JCM 21823 / NBRC 15573 / CFN 42)</name>
    <dbReference type="NCBI Taxonomy" id="347834"/>
    <lineage>
        <taxon>Bacteria</taxon>
        <taxon>Pseudomonadati</taxon>
        <taxon>Pseudomonadota</taxon>
        <taxon>Alphaproteobacteria</taxon>
        <taxon>Hyphomicrobiales</taxon>
        <taxon>Rhizobiaceae</taxon>
        <taxon>Rhizobium/Agrobacterium group</taxon>
        <taxon>Rhizobium</taxon>
    </lineage>
</organism>
<evidence type="ECO:0000255" key="1">
    <source>
        <dbReference type="HAMAP-Rule" id="MF_01031"/>
    </source>
</evidence>
<name>LEUD_RHIEC</name>
<protein>
    <recommendedName>
        <fullName evidence="1">3-isopropylmalate dehydratase small subunit</fullName>
        <ecNumber evidence="1">4.2.1.33</ecNumber>
    </recommendedName>
    <alternativeName>
        <fullName evidence="1">Alpha-IPM isomerase</fullName>
        <shortName evidence="1">IPMI</shortName>
    </alternativeName>
    <alternativeName>
        <fullName evidence="1">Isopropylmalate isomerase</fullName>
    </alternativeName>
</protein>
<accession>Q2K2V2</accession>
<gene>
    <name evidence="1" type="primary">leuD</name>
    <name type="ordered locus">RHE_CH04091</name>
</gene>
<sequence>MDKFVKLTGVAAPLPVVNIDTDMIIPKDYLKTIKRTGLGKGLFAEARYNEDGSENPDFVLNKPAYRDAKILVAGDNFGCGSSREHAPWALLDFGIRCVISTSFADIFYNNCFKNGILPIKVSQENLDKLMDDASRGSNAILTVDLENLEITGPDGGSIKFDLDEFKRHCLLNGLDDIGLTLEKGKAIDEFEKKNAASHPWAA</sequence>
<reference key="1">
    <citation type="journal article" date="2006" name="Proc. Natl. Acad. Sci. U.S.A.">
        <title>The partitioned Rhizobium etli genome: genetic and metabolic redundancy in seven interacting replicons.</title>
        <authorList>
            <person name="Gonzalez V."/>
            <person name="Santamaria R.I."/>
            <person name="Bustos P."/>
            <person name="Hernandez-Gonzalez I."/>
            <person name="Medrano-Soto A."/>
            <person name="Moreno-Hagelsieb G."/>
            <person name="Janga S.C."/>
            <person name="Ramirez M.A."/>
            <person name="Jimenez-Jacinto V."/>
            <person name="Collado-Vides J."/>
            <person name="Davila G."/>
        </authorList>
    </citation>
    <scope>NUCLEOTIDE SEQUENCE [LARGE SCALE GENOMIC DNA]</scope>
    <source>
        <strain>ATCC 51251 / DSM 11541 / JCM 21823 / NBRC 15573 / CFN 42</strain>
    </source>
</reference>
<comment type="function">
    <text evidence="1">Catalyzes the isomerization between 2-isopropylmalate and 3-isopropylmalate, via the formation of 2-isopropylmaleate.</text>
</comment>
<comment type="catalytic activity">
    <reaction evidence="1">
        <text>(2R,3S)-3-isopropylmalate = (2S)-2-isopropylmalate</text>
        <dbReference type="Rhea" id="RHEA:32287"/>
        <dbReference type="ChEBI" id="CHEBI:1178"/>
        <dbReference type="ChEBI" id="CHEBI:35121"/>
        <dbReference type="EC" id="4.2.1.33"/>
    </reaction>
</comment>
<comment type="pathway">
    <text evidence="1">Amino-acid biosynthesis; L-leucine biosynthesis; L-leucine from 3-methyl-2-oxobutanoate: step 2/4.</text>
</comment>
<comment type="subunit">
    <text evidence="1">Heterodimer of LeuC and LeuD.</text>
</comment>
<comment type="similarity">
    <text evidence="1">Belongs to the LeuD family. LeuD type 1 subfamily.</text>
</comment>